<accession>Q7Z3B4</accession>
<accession>B2RCK7</accession>
<accession>B4DT35</accession>
<accession>Q96EA7</accession>
<accession>Q9NVL5</accession>
<accession>Q9P0I1</accession>
<feature type="chain" id="PRO_0000204874" description="Nucleoporin p54">
    <location>
        <begin position="1"/>
        <end position="507"/>
    </location>
</feature>
<feature type="repeat" description="1">
    <location>
        <begin position="5"/>
        <end position="6"/>
    </location>
</feature>
<feature type="repeat" description="2">
    <location>
        <begin position="25"/>
        <end position="26"/>
    </location>
</feature>
<feature type="repeat" description="3">
    <location>
        <begin position="28"/>
        <end position="29"/>
    </location>
</feature>
<feature type="repeat" description="4">
    <location>
        <begin position="53"/>
        <end position="54"/>
    </location>
</feature>
<feature type="repeat" description="5">
    <location>
        <begin position="61"/>
        <end position="62"/>
    </location>
</feature>
<feature type="repeat" description="6">
    <location>
        <begin position="63"/>
        <end position="64"/>
    </location>
</feature>
<feature type="repeat" description="7">
    <location>
        <begin position="67"/>
        <end position="68"/>
    </location>
</feature>
<feature type="repeat" description="8">
    <location>
        <begin position="87"/>
        <end position="88"/>
    </location>
</feature>
<feature type="repeat" description="9">
    <location>
        <begin position="444"/>
        <end position="445"/>
    </location>
</feature>
<feature type="region of interest" description="9 X 2 AA repeats of F-G">
    <location>
        <begin position="5"/>
        <end position="445"/>
    </location>
</feature>
<feature type="splice variant" id="VSP_008740" description="In isoform 2." evidence="5">
    <location>
        <begin position="1"/>
        <end position="180"/>
    </location>
</feature>
<feature type="splice variant" id="VSP_054355" description="In isoform 3." evidence="4">
    <original>GLFGGTQNKGFGFGTGFGTTTGTSTGLGTGLGTGLGFGGFNTQQQQQTT</original>
    <variation>A</variation>
    <location>
        <begin position="51"/>
        <end position="99"/>
    </location>
</feature>
<feature type="splice variant" id="VSP_008741" description="In isoform 2." evidence="5">
    <location>
        <begin position="353"/>
        <end position="388"/>
    </location>
</feature>
<feature type="sequence variant" id="VAR_088652" description="In DYT37; uncertain significance; dbSNP:rs776306424." evidence="3">
    <original>I</original>
    <variation>S</variation>
    <location>
        <position position="358"/>
    </location>
</feature>
<feature type="sequence variant" id="VAR_088653" description="In DYT37; uncertain significance; dbSNP:rs765028638." evidence="3">
    <original>K</original>
    <variation>E</variation>
    <location>
        <position position="376"/>
    </location>
</feature>
<feature type="sequence variant" id="VAR_088654" description="In DYT37; uncertain significance." evidence="3">
    <location>
        <position position="471"/>
    </location>
</feature>
<feature type="sequence variant" id="VAR_088655" description="In DYT37; associated in cis with F-474; uncertain significance." evidence="3">
    <original>E</original>
    <variation>K</variation>
    <location>
        <position position="472"/>
    </location>
</feature>
<feature type="sequence variant" id="VAR_088656" description="In DYT37; associated in cis with K-472; uncertain significance." evidence="3">
    <original>L</original>
    <variation>F</variation>
    <location>
        <position position="474"/>
    </location>
</feature>
<feature type="sequence conflict" description="In Ref. 1; AAF67488." evidence="6" ref="1">
    <original>AGGF</original>
    <variation>GWV</variation>
    <location>
        <begin position="22"/>
        <end position="25"/>
    </location>
</feature>
<feature type="sequence conflict" description="In Ref. 2; BAA91735." evidence="6" ref="2">
    <original>N</original>
    <variation>S</variation>
    <location>
        <position position="226"/>
    </location>
</feature>
<feature type="sequence conflict" description="In Ref. 1; AAF67488." evidence="6" ref="1">
    <original>FEQANIKTQLQQL</original>
    <variation>LNKPYKNTIAAT</variation>
    <location>
        <begin position="265"/>
        <end position="277"/>
    </location>
</feature>
<feature type="sequence conflict" description="In Ref. 1; AAF67488." evidence="6" ref="1">
    <original>L</original>
    <variation>V</variation>
    <location>
        <position position="322"/>
    </location>
</feature>
<feature type="sequence conflict" description="In Ref. 1; AAF67488." evidence="6" ref="1">
    <original>K</original>
    <variation>T</variation>
    <location>
        <position position="363"/>
    </location>
</feature>
<feature type="sequence conflict" description="In Ref. 1; AAF67488." evidence="6" ref="1">
    <original>E</original>
    <variation>G</variation>
    <location>
        <position position="433"/>
    </location>
</feature>
<feature type="sequence conflict" description="In Ref. 3; CAD97957." evidence="6" ref="3">
    <original>S</original>
    <variation>G</variation>
    <location>
        <position position="507"/>
    </location>
</feature>
<feature type="strand" evidence="7">
    <location>
        <begin position="454"/>
        <end position="456"/>
    </location>
</feature>
<feature type="helix" evidence="7">
    <location>
        <begin position="457"/>
        <end position="487"/>
    </location>
</feature>
<feature type="helix" evidence="7">
    <location>
        <begin position="488"/>
        <end position="490"/>
    </location>
</feature>
<name>NUP54_HUMAN</name>
<proteinExistence type="evidence at protein level"/>
<keyword id="KW-0002">3D-structure</keyword>
<keyword id="KW-0025">Alternative splicing</keyword>
<keyword id="KW-1023">Dystonia</keyword>
<keyword id="KW-0325">Glycoprotein</keyword>
<keyword id="KW-0472">Membrane</keyword>
<keyword id="KW-0509">mRNA transport</keyword>
<keyword id="KW-0906">Nuclear pore complex</keyword>
<keyword id="KW-0539">Nucleus</keyword>
<keyword id="KW-0653">Protein transport</keyword>
<keyword id="KW-1267">Proteomics identification</keyword>
<keyword id="KW-1185">Reference proteome</keyword>
<keyword id="KW-0677">Repeat</keyword>
<keyword id="KW-0811">Translocation</keyword>
<keyword id="KW-0813">Transport</keyword>
<comment type="function">
    <text evidence="2">Component of the nuclear pore complex, a complex required for the trafficking across the nuclear membrane.</text>
</comment>
<comment type="subunit">
    <text evidence="2">Component of the p62 complex, a complex composed of NUP62, NUP54, and the isoform p58 and isoform p45 of NUP58. Interacts with NUTF2.</text>
</comment>
<comment type="interaction">
    <interactant intactId="EBI-741048">
        <id>Q7Z3B4</id>
    </interactant>
    <interactant intactId="EBI-712648">
        <id>O95994</id>
        <label>AGR2</label>
    </interactant>
    <organismsDiffer>false</organismsDiffer>
    <experiments>3</experiments>
</comment>
<comment type="interaction">
    <interactant intactId="EBI-741048">
        <id>Q7Z3B4</id>
    </interactant>
    <interactant intactId="EBI-8643161">
        <id>Q9NX04</id>
        <label>AIRIM</label>
    </interactant>
    <organismsDiffer>false</organismsDiffer>
    <experiments>5</experiments>
</comment>
<comment type="interaction">
    <interactant intactId="EBI-741048">
        <id>Q7Z3B4</id>
    </interactant>
    <interactant intactId="EBI-11978055">
        <id>Q10567-3</id>
        <label>AP1B1</label>
    </interactant>
    <organismsDiffer>false</organismsDiffer>
    <experiments>3</experiments>
</comment>
<comment type="interaction">
    <interactant intactId="EBI-741048">
        <id>Q7Z3B4</id>
    </interactant>
    <interactant intactId="EBI-11529439">
        <id>P63010-2</id>
        <label>AP2B1</label>
    </interactant>
    <organismsDiffer>false</organismsDiffer>
    <experiments>3</experiments>
</comment>
<comment type="interaction">
    <interactant intactId="EBI-741048">
        <id>Q7Z3B4</id>
    </interactant>
    <interactant intactId="EBI-953896">
        <id>Q9NP55</id>
        <label>BPIFA1</label>
    </interactant>
    <organismsDiffer>false</organismsDiffer>
    <experiments>3</experiments>
</comment>
<comment type="interaction">
    <interactant intactId="EBI-741048">
        <id>Q7Z3B4</id>
    </interactant>
    <interactant intactId="EBI-725606">
        <id>Q9NWQ9</id>
        <label>C14orf119</label>
    </interactant>
    <organismsDiffer>false</organismsDiffer>
    <experiments>5</experiments>
</comment>
<comment type="interaction">
    <interactant intactId="EBI-741048">
        <id>Q7Z3B4</id>
    </interactant>
    <interactant intactId="EBI-718729">
        <id>P55212</id>
        <label>CASP6</label>
    </interactant>
    <organismsDiffer>false</organismsDiffer>
    <experiments>3</experiments>
</comment>
<comment type="interaction">
    <interactant intactId="EBI-741048">
        <id>Q7Z3B4</id>
    </interactant>
    <interactant intactId="EBI-10175300">
        <id>Q8TD31-3</id>
        <label>CCHCR1</label>
    </interactant>
    <organismsDiffer>false</organismsDiffer>
    <experiments>3</experiments>
</comment>
<comment type="interaction">
    <interactant intactId="EBI-741048">
        <id>Q7Z3B4</id>
    </interactant>
    <interactant intactId="EBI-6624398">
        <id>P06307</id>
        <label>CCK</label>
    </interactant>
    <organismsDiffer>false</organismsDiffer>
    <experiments>3</experiments>
</comment>
<comment type="interaction">
    <interactant intactId="EBI-741048">
        <id>Q7Z3B4</id>
    </interactant>
    <interactant intactId="EBI-396137">
        <id>Q9UJX2</id>
        <label>CDC23</label>
    </interactant>
    <organismsDiffer>false</organismsDiffer>
    <experiments>3</experiments>
</comment>
<comment type="interaction">
    <interactant intactId="EBI-741048">
        <id>Q7Z3B4</id>
    </interactant>
    <interactant intactId="EBI-1003700">
        <id>Q9H3R5</id>
        <label>CENPH</label>
    </interactant>
    <organismsDiffer>false</organismsDiffer>
    <experiments>3</experiments>
</comment>
<comment type="interaction">
    <interactant intactId="EBI-741048">
        <id>Q7Z3B4</id>
    </interactant>
    <interactant intactId="EBI-12091947">
        <id>O75935-2</id>
        <label>DCTN3</label>
    </interactant>
    <organismsDiffer>false</organismsDiffer>
    <experiments>3</experiments>
</comment>
<comment type="interaction">
    <interactant intactId="EBI-741048">
        <id>Q7Z3B4</id>
    </interactant>
    <interactant intactId="EBI-743105">
        <id>Q5JVL4</id>
        <label>EFHC1</label>
    </interactant>
    <organismsDiffer>false</organismsDiffer>
    <experiments>3</experiments>
</comment>
<comment type="interaction">
    <interactant intactId="EBI-741048">
        <id>Q7Z3B4</id>
    </interactant>
    <interactant intactId="EBI-711990">
        <id>O00303</id>
        <label>EIF3F</label>
    </interactant>
    <organismsDiffer>false</organismsDiffer>
    <experiments>3</experiments>
</comment>
<comment type="interaction">
    <interactant intactId="EBI-741048">
        <id>Q7Z3B4</id>
    </interactant>
    <interactant intactId="EBI-13371226">
        <id>Q9NYK6-3</id>
        <label>EURL</label>
    </interactant>
    <organismsDiffer>false</organismsDiffer>
    <experiments>3</experiments>
</comment>
<comment type="interaction">
    <interactant intactId="EBI-741048">
        <id>Q7Z3B4</id>
    </interactant>
    <interactant intactId="EBI-1045313">
        <id>Q9NV70</id>
        <label>EXOC1</label>
    </interactant>
    <organismsDiffer>false</organismsDiffer>
    <experiments>5</experiments>
</comment>
<comment type="interaction">
    <interactant intactId="EBI-741048">
        <id>Q7Z3B4</id>
    </interactant>
    <interactant intactId="EBI-742102">
        <id>Q8IYI6</id>
        <label>EXOC8</label>
    </interactant>
    <organismsDiffer>false</organismsDiffer>
    <experiments>3</experiments>
</comment>
<comment type="interaction">
    <interactant intactId="EBI-741048">
        <id>Q7Z3B4</id>
    </interactant>
    <interactant intactId="EBI-2514791">
        <id>Q96CS2</id>
        <label>HAUS1</label>
    </interactant>
    <organismsDiffer>false</organismsDiffer>
    <experiments>3</experiments>
</comment>
<comment type="interaction">
    <interactant intactId="EBI-741048">
        <id>Q7Z3B4</id>
    </interactant>
    <interactant intactId="EBI-2558143">
        <id>Q9BT25</id>
        <label>HAUS8</label>
    </interactant>
    <organismsDiffer>false</organismsDiffer>
    <experiments>3</experiments>
</comment>
<comment type="interaction">
    <interactant intactId="EBI-741048">
        <id>Q7Z3B4</id>
    </interactant>
    <interactant intactId="EBI-740220">
        <id>O14964</id>
        <label>HGS</label>
    </interactant>
    <organismsDiffer>false</organismsDiffer>
    <experiments>7</experiments>
</comment>
<comment type="interaction">
    <interactant intactId="EBI-741048">
        <id>Q7Z3B4</id>
    </interactant>
    <interactant intactId="EBI-712096">
        <id>P30519</id>
        <label>HMOX2</label>
    </interactant>
    <organismsDiffer>false</organismsDiffer>
    <experiments>3</experiments>
</comment>
<comment type="interaction">
    <interactant intactId="EBI-741048">
        <id>Q7Z3B4</id>
    </interactant>
    <interactant intactId="EBI-746815">
        <id>Q86YM7</id>
        <label>HOMER1</label>
    </interactant>
    <organismsDiffer>false</organismsDiffer>
    <experiments>4</experiments>
</comment>
<comment type="interaction">
    <interactant intactId="EBI-741048">
        <id>Q7Z3B4</id>
    </interactant>
    <interactant intactId="EBI-744203">
        <id>Q8IY31</id>
        <label>IFT20</label>
    </interactant>
    <organismsDiffer>false</organismsDiffer>
    <experiments>3</experiments>
</comment>
<comment type="interaction">
    <interactant intactId="EBI-741048">
        <id>Q7Z3B4</id>
    </interactant>
    <interactant intactId="EBI-9091197">
        <id>Q8IY31-3</id>
        <label>IFT20</label>
    </interactant>
    <organismsDiffer>false</organismsDiffer>
    <experiments>5</experiments>
</comment>
<comment type="interaction">
    <interactant intactId="EBI-741048">
        <id>Q7Z3B4</id>
    </interactant>
    <interactant intactId="EBI-948266">
        <id>O14901</id>
        <label>KLF11</label>
    </interactant>
    <organismsDiffer>false</organismsDiffer>
    <experiments>3</experiments>
</comment>
<comment type="interaction">
    <interactant intactId="EBI-741048">
        <id>Q7Z3B4</id>
    </interactant>
    <interactant intactId="EBI-739566">
        <id>P19012</id>
        <label>KRT15</label>
    </interactant>
    <organismsDiffer>false</organismsDiffer>
    <experiments>4</experiments>
</comment>
<comment type="interaction">
    <interactant intactId="EBI-741048">
        <id>Q7Z3B4</id>
    </interactant>
    <interactant intactId="EBI-3044087">
        <id>Q7Z3Y8</id>
        <label>KRT27</label>
    </interactant>
    <organismsDiffer>false</organismsDiffer>
    <experiments>3</experiments>
</comment>
<comment type="interaction">
    <interactant intactId="EBI-741048">
        <id>Q7Z3B4</id>
    </interactant>
    <interactant intactId="EBI-1049638">
        <id>Q14525</id>
        <label>KRT33B</label>
    </interactant>
    <organismsDiffer>false</organismsDiffer>
    <experiments>3</experiments>
</comment>
<comment type="interaction">
    <interactant intactId="EBI-741048">
        <id>Q7Z3B4</id>
    </interactant>
    <interactant intactId="EBI-21591415">
        <id>P13473-2</id>
        <label>LAMP2</label>
    </interactant>
    <organismsDiffer>false</organismsDiffer>
    <experiments>3</experiments>
</comment>
<comment type="interaction">
    <interactant intactId="EBI-741048">
        <id>Q7Z3B4</id>
    </interactant>
    <interactant intactId="EBI-928842">
        <id>Q9GZM8</id>
        <label>NDEL1</label>
    </interactant>
    <organismsDiffer>false</organismsDiffer>
    <experiments>3</experiments>
</comment>
<comment type="interaction">
    <interactant intactId="EBI-741048">
        <id>Q7Z3B4</id>
    </interactant>
    <interactant intactId="EBI-10271199">
        <id>Q8NI38</id>
        <label>NFKBID</label>
    </interactant>
    <organismsDiffer>false</organismsDiffer>
    <experiments>3</experiments>
</comment>
<comment type="interaction">
    <interactant intactId="EBI-741048">
        <id>Q7Z3B4</id>
    </interactant>
    <interactant intactId="EBI-2811583">
        <id>Q9BVL2</id>
        <label>NUP58</label>
    </interactant>
    <organismsDiffer>false</organismsDiffer>
    <experiments>14</experiments>
</comment>
<comment type="interaction">
    <interactant intactId="EBI-741048">
        <id>Q7Z3B4</id>
    </interactant>
    <interactant intactId="EBI-347978">
        <id>P37198</id>
        <label>NUP62</label>
    </interactant>
    <organismsDiffer>false</organismsDiffer>
    <experiments>14</experiments>
</comment>
<comment type="interaction">
    <interactant intactId="EBI-741048">
        <id>Q7Z3B4</id>
    </interactant>
    <interactant intactId="EBI-751933">
        <id>Q9H1M0</id>
        <label>NUP62CL</label>
    </interactant>
    <organismsDiffer>false</organismsDiffer>
    <experiments>4</experiments>
</comment>
<comment type="interaction">
    <interactant intactId="EBI-741048">
        <id>Q7Z3B4</id>
    </interactant>
    <interactant intactId="EBI-591778">
        <id>P61970</id>
        <label>NUTF2</label>
    </interactant>
    <organismsDiffer>false</organismsDiffer>
    <experiments>3</experiments>
</comment>
<comment type="interaction">
    <interactant intactId="EBI-741048">
        <id>Q7Z3B4</id>
    </interactant>
    <interactant intactId="EBI-536879">
        <id>O43482</id>
        <label>OIP5</label>
    </interactant>
    <organismsDiffer>false</organismsDiffer>
    <experiments>3</experiments>
</comment>
<comment type="interaction">
    <interactant intactId="EBI-741048">
        <id>Q7Z3B4</id>
    </interactant>
    <interactant intactId="EBI-2692890">
        <id>Q96KN3</id>
        <label>PKNOX2</label>
    </interactant>
    <organismsDiffer>false</organismsDiffer>
    <experiments>3</experiments>
</comment>
<comment type="interaction">
    <interactant intactId="EBI-741048">
        <id>Q7Z3B4</id>
    </interactant>
    <interactant intactId="EBI-286642">
        <id>P62826</id>
        <label>RAN</label>
    </interactant>
    <organismsDiffer>false</organismsDiffer>
    <experiments>4</experiments>
</comment>
<comment type="interaction">
    <interactant intactId="EBI-741048">
        <id>Q7Z3B4</id>
    </interactant>
    <interactant intactId="EBI-748621">
        <id>Q9UJW9</id>
        <label>SERTAD3</label>
    </interactant>
    <organismsDiffer>false</organismsDiffer>
    <experiments>3</experiments>
</comment>
<comment type="interaction">
    <interactant intactId="EBI-741048">
        <id>Q7Z3B4</id>
    </interactant>
    <interactant intactId="EBI-347919">
        <id>Q9H7B4</id>
        <label>SMYD3</label>
    </interactant>
    <organismsDiffer>false</organismsDiffer>
    <experiments>3</experiments>
</comment>
<comment type="interaction">
    <interactant intactId="EBI-741048">
        <id>Q7Z3B4</id>
    </interactant>
    <interactant intactId="EBI-12288855">
        <id>Q5JUK2</id>
        <label>SOHLH1</label>
    </interactant>
    <organismsDiffer>false</organismsDiffer>
    <experiments>3</experiments>
</comment>
<comment type="interaction">
    <interactant intactId="EBI-741048">
        <id>Q7Z3B4</id>
    </interactant>
    <interactant intactId="EBI-742688">
        <id>Q9NZD8</id>
        <label>SPG21</label>
    </interactant>
    <organismsDiffer>false</organismsDiffer>
    <experiments>3</experiments>
</comment>
<comment type="interaction">
    <interactant intactId="EBI-741048">
        <id>Q7Z3B4</id>
    </interactant>
    <interactant intactId="EBI-2554984">
        <id>Q9Y6A5</id>
        <label>TACC3</label>
    </interactant>
    <organismsDiffer>false</organismsDiffer>
    <experiments>3</experiments>
</comment>
<comment type="interaction">
    <interactant intactId="EBI-741048">
        <id>Q7Z3B4</id>
    </interactant>
    <interactant intactId="EBI-740781">
        <id>Q9BT92</id>
        <label>TCHP</label>
    </interactant>
    <organismsDiffer>false</organismsDiffer>
    <experiments>3</experiments>
</comment>
<comment type="interaction">
    <interactant intactId="EBI-741048">
        <id>Q7Z3B4</id>
    </interactant>
    <interactant intactId="EBI-10180409">
        <id>Q969V4</id>
        <label>TEKT1</label>
    </interactant>
    <organismsDiffer>false</organismsDiffer>
    <experiments>3</experiments>
</comment>
<comment type="interaction">
    <interactant intactId="EBI-741048">
        <id>Q7Z3B4</id>
    </interactant>
    <interactant intactId="EBI-12090309">
        <id>Q9BXU0</id>
        <label>TEX12</label>
    </interactant>
    <organismsDiffer>false</organismsDiffer>
    <experiments>3</experiments>
</comment>
<comment type="interaction">
    <interactant intactId="EBI-741048">
        <id>Q7Z3B4</id>
    </interactant>
    <interactant intactId="EBI-355607">
        <id>P06753</id>
        <label>TPM3</label>
    </interactant>
    <organismsDiffer>false</organismsDiffer>
    <experiments>6</experiments>
</comment>
<comment type="interaction">
    <interactant intactId="EBI-741048">
        <id>Q7Z3B4</id>
    </interactant>
    <interactant intactId="EBI-2559305">
        <id>A5D8V6</id>
        <label>VPS37C</label>
    </interactant>
    <organismsDiffer>false</organismsDiffer>
    <experiments>3</experiments>
</comment>
<comment type="interaction">
    <interactant intactId="EBI-741048">
        <id>Q7Z3B4</id>
    </interactant>
    <interactant intactId="EBI-1001132">
        <id>O95229</id>
        <label>ZWINT</label>
    </interactant>
    <organismsDiffer>false</organismsDiffer>
    <experiments>3</experiments>
</comment>
<comment type="interaction">
    <interactant intactId="EBI-741048">
        <id>Q7Z3B4</id>
    </interactant>
    <interactant intactId="EBI-11514477">
        <id>Q67020</id>
        <label>PA</label>
    </interactant>
    <organismsDiffer>true</organismsDiffer>
    <experiments>2</experiments>
</comment>
<comment type="interaction">
    <interactant intactId="EBI-741048">
        <id>Q7Z3B4</id>
    </interactant>
    <interactant intactId="EBI-25475877">
        <id>PRO_0000449627</id>
        <label>rep</label>
        <dbReference type="UniProtKB" id="P0DTD1"/>
    </interactant>
    <organismsDiffer>true</organismsDiffer>
    <experiments>3</experiments>
</comment>
<comment type="subcellular location">
    <subcellularLocation>
        <location evidence="2">Nucleus</location>
        <location evidence="2">Nuclear pore complex</location>
    </subcellularLocation>
    <subcellularLocation>
        <location evidence="2">Nucleus membrane</location>
        <topology evidence="2">Peripheral membrane protein</topology>
        <orientation evidence="2">Cytoplasmic side</orientation>
    </subcellularLocation>
    <subcellularLocation>
        <location evidence="2">Nucleus membrane</location>
        <topology evidence="2">Peripheral membrane protein</topology>
        <orientation evidence="2">Nucleoplasmic side</orientation>
    </subcellularLocation>
    <text evidence="2">Biased towards cytoplasmic side. Central region of the nuclear pore complex, within the transporter.</text>
</comment>
<comment type="alternative products">
    <event type="alternative splicing"/>
    <isoform>
        <id>Q7Z3B4-1</id>
        <name>1</name>
        <sequence type="displayed"/>
    </isoform>
    <isoform>
        <id>Q7Z3B4-2</id>
        <name>2</name>
        <sequence type="described" ref="VSP_008740 VSP_008741"/>
    </isoform>
    <isoform>
        <id>Q7Z3B4-3</id>
        <name>3</name>
        <sequence type="described" ref="VSP_054355"/>
    </isoform>
</comment>
<comment type="domain">
    <text>Contains FG repeats.</text>
</comment>
<comment type="PTM">
    <text evidence="1">O-glycosylated.</text>
</comment>
<comment type="disease" evidence="3">
    <disease id="DI-06706">
        <name>Dystonia 37, early-onset, with striatal lesions</name>
        <acronym>DYT37</acronym>
        <description>A form of dystonia, a disorder defined by the presence of sustained involuntary muscle contraction, often leading to abnormal postures. DYT37 is an autosomal recessive form characterized by the onset of progressive dystonia, dysphagia, and choreoathetosis in the first months or years of life. Affected individuals show delayed motor development and may have impaired intellectual development.</description>
        <dbReference type="MIM" id="620427"/>
    </disease>
    <text>The disease may be caused by variants affecting the gene represented in this entry.</text>
</comment>
<comment type="similarity">
    <text evidence="6">Belongs to the NUP54 family.</text>
</comment>
<comment type="sequence caution" evidence="6">
    <conflict type="frameshift">
        <sequence resource="EMBL-CDS" id="BAA91735"/>
    </conflict>
</comment>
<reference key="1">
    <citation type="journal article" date="2000" name="Proc. Natl. Acad. Sci. U.S.A.">
        <title>Gene expression profiling in the human hypothalamus-pituitary-adrenal axis and full-length cDNA cloning.</title>
        <authorList>
            <person name="Hu R.-M."/>
            <person name="Han Z.-G."/>
            <person name="Song H.-D."/>
            <person name="Peng Y.-D."/>
            <person name="Huang Q.-H."/>
            <person name="Ren S.-X."/>
            <person name="Gu Y.-J."/>
            <person name="Huang C.-H."/>
            <person name="Li Y.-B."/>
            <person name="Jiang C.-L."/>
            <person name="Fu G."/>
            <person name="Zhang Q.-H."/>
            <person name="Gu B.-W."/>
            <person name="Dai M."/>
            <person name="Mao Y.-F."/>
            <person name="Gao G.-F."/>
            <person name="Rong R."/>
            <person name="Ye M."/>
            <person name="Zhou J."/>
            <person name="Xu S.-H."/>
            <person name="Gu J."/>
            <person name="Shi J.-X."/>
            <person name="Jin W.-R."/>
            <person name="Zhang C.-K."/>
            <person name="Wu T.-M."/>
            <person name="Huang G.-Y."/>
            <person name="Chen Z."/>
            <person name="Chen M.-D."/>
            <person name="Chen J.-L."/>
        </authorList>
    </citation>
    <scope>NUCLEOTIDE SEQUENCE [LARGE SCALE MRNA] (ISOFORM 1)</scope>
    <source>
        <tissue>Pituitary</tissue>
    </source>
</reference>
<reference key="2">
    <citation type="journal article" date="2004" name="Nat. Genet.">
        <title>Complete sequencing and characterization of 21,243 full-length human cDNAs.</title>
        <authorList>
            <person name="Ota T."/>
            <person name="Suzuki Y."/>
            <person name="Nishikawa T."/>
            <person name="Otsuki T."/>
            <person name="Sugiyama T."/>
            <person name="Irie R."/>
            <person name="Wakamatsu A."/>
            <person name="Hayashi K."/>
            <person name="Sato H."/>
            <person name="Nagai K."/>
            <person name="Kimura K."/>
            <person name="Makita H."/>
            <person name="Sekine M."/>
            <person name="Obayashi M."/>
            <person name="Nishi T."/>
            <person name="Shibahara T."/>
            <person name="Tanaka T."/>
            <person name="Ishii S."/>
            <person name="Yamamoto J."/>
            <person name="Saito K."/>
            <person name="Kawai Y."/>
            <person name="Isono Y."/>
            <person name="Nakamura Y."/>
            <person name="Nagahari K."/>
            <person name="Murakami K."/>
            <person name="Yasuda T."/>
            <person name="Iwayanagi T."/>
            <person name="Wagatsuma M."/>
            <person name="Shiratori A."/>
            <person name="Sudo H."/>
            <person name="Hosoiri T."/>
            <person name="Kaku Y."/>
            <person name="Kodaira H."/>
            <person name="Kondo H."/>
            <person name="Sugawara M."/>
            <person name="Takahashi M."/>
            <person name="Kanda K."/>
            <person name="Yokoi T."/>
            <person name="Furuya T."/>
            <person name="Kikkawa E."/>
            <person name="Omura Y."/>
            <person name="Abe K."/>
            <person name="Kamihara K."/>
            <person name="Katsuta N."/>
            <person name="Sato K."/>
            <person name="Tanikawa M."/>
            <person name="Yamazaki M."/>
            <person name="Ninomiya K."/>
            <person name="Ishibashi T."/>
            <person name="Yamashita H."/>
            <person name="Murakawa K."/>
            <person name="Fujimori K."/>
            <person name="Tanai H."/>
            <person name="Kimata M."/>
            <person name="Watanabe M."/>
            <person name="Hiraoka S."/>
            <person name="Chiba Y."/>
            <person name="Ishida S."/>
            <person name="Ono Y."/>
            <person name="Takiguchi S."/>
            <person name="Watanabe S."/>
            <person name="Yosida M."/>
            <person name="Hotuta T."/>
            <person name="Kusano J."/>
            <person name="Kanehori K."/>
            <person name="Takahashi-Fujii A."/>
            <person name="Hara H."/>
            <person name="Tanase T.-O."/>
            <person name="Nomura Y."/>
            <person name="Togiya S."/>
            <person name="Komai F."/>
            <person name="Hara R."/>
            <person name="Takeuchi K."/>
            <person name="Arita M."/>
            <person name="Imose N."/>
            <person name="Musashino K."/>
            <person name="Yuuki H."/>
            <person name="Oshima A."/>
            <person name="Sasaki N."/>
            <person name="Aotsuka S."/>
            <person name="Yoshikawa Y."/>
            <person name="Matsunawa H."/>
            <person name="Ichihara T."/>
            <person name="Shiohata N."/>
            <person name="Sano S."/>
            <person name="Moriya S."/>
            <person name="Momiyama H."/>
            <person name="Satoh N."/>
            <person name="Takami S."/>
            <person name="Terashima Y."/>
            <person name="Suzuki O."/>
            <person name="Nakagawa S."/>
            <person name="Senoh A."/>
            <person name="Mizoguchi H."/>
            <person name="Goto Y."/>
            <person name="Shimizu F."/>
            <person name="Wakebe H."/>
            <person name="Hishigaki H."/>
            <person name="Watanabe T."/>
            <person name="Sugiyama A."/>
            <person name="Takemoto M."/>
            <person name="Kawakami B."/>
            <person name="Yamazaki M."/>
            <person name="Watanabe K."/>
            <person name="Kumagai A."/>
            <person name="Itakura S."/>
            <person name="Fukuzumi Y."/>
            <person name="Fujimori Y."/>
            <person name="Komiyama M."/>
            <person name="Tashiro H."/>
            <person name="Tanigami A."/>
            <person name="Fujiwara T."/>
            <person name="Ono T."/>
            <person name="Yamada K."/>
            <person name="Fujii Y."/>
            <person name="Ozaki K."/>
            <person name="Hirao M."/>
            <person name="Ohmori Y."/>
            <person name="Kawabata A."/>
            <person name="Hikiji T."/>
            <person name="Kobatake N."/>
            <person name="Inagaki H."/>
            <person name="Ikema Y."/>
            <person name="Okamoto S."/>
            <person name="Okitani R."/>
            <person name="Kawakami T."/>
            <person name="Noguchi S."/>
            <person name="Itoh T."/>
            <person name="Shigeta K."/>
            <person name="Senba T."/>
            <person name="Matsumura K."/>
            <person name="Nakajima Y."/>
            <person name="Mizuno T."/>
            <person name="Morinaga M."/>
            <person name="Sasaki M."/>
            <person name="Togashi T."/>
            <person name="Oyama M."/>
            <person name="Hata H."/>
            <person name="Watanabe M."/>
            <person name="Komatsu T."/>
            <person name="Mizushima-Sugano J."/>
            <person name="Satoh T."/>
            <person name="Shirai Y."/>
            <person name="Takahashi Y."/>
            <person name="Nakagawa K."/>
            <person name="Okumura K."/>
            <person name="Nagase T."/>
            <person name="Nomura N."/>
            <person name="Kikuchi H."/>
            <person name="Masuho Y."/>
            <person name="Yamashita R."/>
            <person name="Nakai K."/>
            <person name="Yada T."/>
            <person name="Nakamura Y."/>
            <person name="Ohara O."/>
            <person name="Isogai T."/>
            <person name="Sugano S."/>
        </authorList>
    </citation>
    <scope>NUCLEOTIDE SEQUENCE [LARGE SCALE MRNA] (ISOFORMS 1 AND 3)</scope>
    <source>
        <tissue>Teratocarcinoma</tissue>
    </source>
</reference>
<reference key="3">
    <citation type="journal article" date="2007" name="BMC Genomics">
        <title>The full-ORF clone resource of the German cDNA consortium.</title>
        <authorList>
            <person name="Bechtel S."/>
            <person name="Rosenfelder H."/>
            <person name="Duda A."/>
            <person name="Schmidt C.P."/>
            <person name="Ernst U."/>
            <person name="Wellenreuther R."/>
            <person name="Mehrle A."/>
            <person name="Schuster C."/>
            <person name="Bahr A."/>
            <person name="Bloecker H."/>
            <person name="Heubner D."/>
            <person name="Hoerlein A."/>
            <person name="Michel G."/>
            <person name="Wedler H."/>
            <person name="Koehrer K."/>
            <person name="Ottenwaelder B."/>
            <person name="Poustka A."/>
            <person name="Wiemann S."/>
            <person name="Schupp I."/>
        </authorList>
    </citation>
    <scope>NUCLEOTIDE SEQUENCE [LARGE SCALE MRNA] (ISOFORM 2)</scope>
    <source>
        <tissue>Endometrial tumor</tissue>
    </source>
</reference>
<reference key="4">
    <citation type="journal article" date="2005" name="Nature">
        <title>Generation and annotation of the DNA sequences of human chromosomes 2 and 4.</title>
        <authorList>
            <person name="Hillier L.W."/>
            <person name="Graves T.A."/>
            <person name="Fulton R.S."/>
            <person name="Fulton L.A."/>
            <person name="Pepin K.H."/>
            <person name="Minx P."/>
            <person name="Wagner-McPherson C."/>
            <person name="Layman D."/>
            <person name="Wylie K."/>
            <person name="Sekhon M."/>
            <person name="Becker M.C."/>
            <person name="Fewell G.A."/>
            <person name="Delehaunty K.D."/>
            <person name="Miner T.L."/>
            <person name="Nash W.E."/>
            <person name="Kremitzki C."/>
            <person name="Oddy L."/>
            <person name="Du H."/>
            <person name="Sun H."/>
            <person name="Bradshaw-Cordum H."/>
            <person name="Ali J."/>
            <person name="Carter J."/>
            <person name="Cordes M."/>
            <person name="Harris A."/>
            <person name="Isak A."/>
            <person name="van Brunt A."/>
            <person name="Nguyen C."/>
            <person name="Du F."/>
            <person name="Courtney L."/>
            <person name="Kalicki J."/>
            <person name="Ozersky P."/>
            <person name="Abbott S."/>
            <person name="Armstrong J."/>
            <person name="Belter E.A."/>
            <person name="Caruso L."/>
            <person name="Cedroni M."/>
            <person name="Cotton M."/>
            <person name="Davidson T."/>
            <person name="Desai A."/>
            <person name="Elliott G."/>
            <person name="Erb T."/>
            <person name="Fronick C."/>
            <person name="Gaige T."/>
            <person name="Haakenson W."/>
            <person name="Haglund K."/>
            <person name="Holmes A."/>
            <person name="Harkins R."/>
            <person name="Kim K."/>
            <person name="Kruchowski S.S."/>
            <person name="Strong C.M."/>
            <person name="Grewal N."/>
            <person name="Goyea E."/>
            <person name="Hou S."/>
            <person name="Levy A."/>
            <person name="Martinka S."/>
            <person name="Mead K."/>
            <person name="McLellan M.D."/>
            <person name="Meyer R."/>
            <person name="Randall-Maher J."/>
            <person name="Tomlinson C."/>
            <person name="Dauphin-Kohlberg S."/>
            <person name="Kozlowicz-Reilly A."/>
            <person name="Shah N."/>
            <person name="Swearengen-Shahid S."/>
            <person name="Snider J."/>
            <person name="Strong J.T."/>
            <person name="Thompson J."/>
            <person name="Yoakum M."/>
            <person name="Leonard S."/>
            <person name="Pearman C."/>
            <person name="Trani L."/>
            <person name="Radionenko M."/>
            <person name="Waligorski J.E."/>
            <person name="Wang C."/>
            <person name="Rock S.M."/>
            <person name="Tin-Wollam A.-M."/>
            <person name="Maupin R."/>
            <person name="Latreille P."/>
            <person name="Wendl M.C."/>
            <person name="Yang S.-P."/>
            <person name="Pohl C."/>
            <person name="Wallis J.W."/>
            <person name="Spieth J."/>
            <person name="Bieri T.A."/>
            <person name="Berkowicz N."/>
            <person name="Nelson J.O."/>
            <person name="Osborne J."/>
            <person name="Ding L."/>
            <person name="Meyer R."/>
            <person name="Sabo A."/>
            <person name="Shotland Y."/>
            <person name="Sinha P."/>
            <person name="Wohldmann P.E."/>
            <person name="Cook L.L."/>
            <person name="Hickenbotham M.T."/>
            <person name="Eldred J."/>
            <person name="Williams D."/>
            <person name="Jones T.A."/>
            <person name="She X."/>
            <person name="Ciccarelli F.D."/>
            <person name="Izaurralde E."/>
            <person name="Taylor J."/>
            <person name="Schmutz J."/>
            <person name="Myers R.M."/>
            <person name="Cox D.R."/>
            <person name="Huang X."/>
            <person name="McPherson J.D."/>
            <person name="Mardis E.R."/>
            <person name="Clifton S.W."/>
            <person name="Warren W.C."/>
            <person name="Chinwalla A.T."/>
            <person name="Eddy S.R."/>
            <person name="Marra M.A."/>
            <person name="Ovcharenko I."/>
            <person name="Furey T.S."/>
            <person name="Miller W."/>
            <person name="Eichler E.E."/>
            <person name="Bork P."/>
            <person name="Suyama M."/>
            <person name="Torrents D."/>
            <person name="Waterston R.H."/>
            <person name="Wilson R.K."/>
        </authorList>
    </citation>
    <scope>NUCLEOTIDE SEQUENCE [LARGE SCALE GENOMIC DNA]</scope>
</reference>
<reference key="5">
    <citation type="submission" date="2005-07" db="EMBL/GenBank/DDBJ databases">
        <authorList>
            <person name="Mural R.J."/>
            <person name="Istrail S."/>
            <person name="Sutton G.G."/>
            <person name="Florea L."/>
            <person name="Halpern A.L."/>
            <person name="Mobarry C.M."/>
            <person name="Lippert R."/>
            <person name="Walenz B."/>
            <person name="Shatkay H."/>
            <person name="Dew I."/>
            <person name="Miller J.R."/>
            <person name="Flanigan M.J."/>
            <person name="Edwards N.J."/>
            <person name="Bolanos R."/>
            <person name="Fasulo D."/>
            <person name="Halldorsson B.V."/>
            <person name="Hannenhalli S."/>
            <person name="Turner R."/>
            <person name="Yooseph S."/>
            <person name="Lu F."/>
            <person name="Nusskern D.R."/>
            <person name="Shue B.C."/>
            <person name="Zheng X.H."/>
            <person name="Zhong F."/>
            <person name="Delcher A.L."/>
            <person name="Huson D.H."/>
            <person name="Kravitz S.A."/>
            <person name="Mouchard L."/>
            <person name="Reinert K."/>
            <person name="Remington K.A."/>
            <person name="Clark A.G."/>
            <person name="Waterman M.S."/>
            <person name="Eichler E.E."/>
            <person name="Adams M.D."/>
            <person name="Hunkapiller M.W."/>
            <person name="Myers E.W."/>
            <person name="Venter J.C."/>
        </authorList>
    </citation>
    <scope>NUCLEOTIDE SEQUENCE [LARGE SCALE GENOMIC DNA]</scope>
</reference>
<reference key="6">
    <citation type="journal article" date="2011" name="BMC Syst. Biol.">
        <title>Initial characterization of the human central proteome.</title>
        <authorList>
            <person name="Burkard T.R."/>
            <person name="Planyavsky M."/>
            <person name="Kaupe I."/>
            <person name="Breitwieser F.P."/>
            <person name="Buerckstuemmer T."/>
            <person name="Bennett K.L."/>
            <person name="Superti-Furga G."/>
            <person name="Colinge J."/>
        </authorList>
    </citation>
    <scope>IDENTIFICATION BY MASS SPECTROMETRY [LARGE SCALE ANALYSIS]</scope>
</reference>
<reference key="7">
    <citation type="journal article" date="2023" name="Ann. Neurol.">
        <title>Recessive NUP54 Variants Underlie Early-Onset Dystonia with Striatal Lesions.</title>
        <authorList>
            <person name="Harrer P."/>
            <person name="Schalk A."/>
            <person name="Shimura M."/>
            <person name="Baer S."/>
            <person name="Calmels N."/>
            <person name="Spitz M.A."/>
            <person name="Warde M.A."/>
            <person name="Schaefer E."/>
            <person name="Kittke V.M.S."/>
            <person name="Dincer Y."/>
            <person name="Wagner M."/>
            <person name="Dzinovic I."/>
            <person name="Berutti R."/>
            <person name="Sato T."/>
            <person name="Shirakawa T."/>
            <person name="Okazaki Y."/>
            <person name="Murayama K."/>
            <person name="Oexle K."/>
            <person name="Prokisch H."/>
            <person name="Mall V."/>
            <person name="Melcak I."/>
            <person name="Winkelmann J."/>
            <person name="Zech M."/>
        </authorList>
    </citation>
    <scope>VARIANTS DYT37 SER-358; GLU-376; GLN-471 DEL; LYS-472 AND PHE-474</scope>
    <scope>INVOLVEMENT IN DYT37</scope>
</reference>
<sequence length="507" mass="55435">MAFNFGAPSGTSGTAAATAAPAGGFGGFGTTSTTAGSAFSFSAPTNTGTTGLFGGTQNKGFGFGTGFGTTTGTSTGLGTGLGTGLGFGGFNTQQQQQTTLGGLFSQPTQAPTQSNQLINTASALSAPTLLGDERDAILAKWNQLQAFWGTGKGYFNNNIPPVEFTQENPFCRFKAVGYSCMPSNKDEDGLVVLVFNKKETEIRSQQQQLVESLHKVLGGNQTLTVNVEGTKTLPDDQTEVVIYVVERSPNGTSRRVPATTLYAHFEQANIKTQLQQLGVTLSMTRTELSPAQIKQLLQNPPAGVDPIIWEQAKVDNPDSEKLIPVPMVGFKELLRRLKVQDQMTKQHQTRLDIISEDISELQKNQTTSVAKIAQYKRKLMDLSHRTLQVLIKQEIQRKSGYAIQADEEQLRVQLDTIQGELNAPTQFKGRLNELMSQIRMQNHFGAVRSEERYYIDADLLREIKQHLKQQQEGLSHLISIIKDDLEDIKLVEHGLNETIHIRGGVFS</sequence>
<gene>
    <name type="primary">NUP54</name>
</gene>
<organism>
    <name type="scientific">Homo sapiens</name>
    <name type="common">Human</name>
    <dbReference type="NCBI Taxonomy" id="9606"/>
    <lineage>
        <taxon>Eukaryota</taxon>
        <taxon>Metazoa</taxon>
        <taxon>Chordata</taxon>
        <taxon>Craniata</taxon>
        <taxon>Vertebrata</taxon>
        <taxon>Euteleostomi</taxon>
        <taxon>Mammalia</taxon>
        <taxon>Eutheria</taxon>
        <taxon>Euarchontoglires</taxon>
        <taxon>Primates</taxon>
        <taxon>Haplorrhini</taxon>
        <taxon>Catarrhini</taxon>
        <taxon>Hominidae</taxon>
        <taxon>Homo</taxon>
    </lineage>
</organism>
<protein>
    <recommendedName>
        <fullName>Nucleoporin p54</fullName>
    </recommendedName>
    <alternativeName>
        <fullName>54 kDa nucleoporin</fullName>
    </alternativeName>
</protein>
<evidence type="ECO:0000250" key="1"/>
<evidence type="ECO:0000250" key="2">
    <source>
        <dbReference type="UniProtKB" id="P70582"/>
    </source>
</evidence>
<evidence type="ECO:0000269" key="3">
    <source>
    </source>
</evidence>
<evidence type="ECO:0000303" key="4">
    <source>
    </source>
</evidence>
<evidence type="ECO:0000303" key="5">
    <source>
    </source>
</evidence>
<evidence type="ECO:0000305" key="6"/>
<evidence type="ECO:0007829" key="7">
    <source>
        <dbReference type="PDB" id="4JNU"/>
    </source>
</evidence>
<dbReference type="EMBL" id="AF157322">
    <property type="protein sequence ID" value="AAF67488.1"/>
    <property type="molecule type" value="mRNA"/>
</dbReference>
<dbReference type="EMBL" id="AK001517">
    <property type="protein sequence ID" value="BAA91735.1"/>
    <property type="status" value="ALT_FRAME"/>
    <property type="molecule type" value="mRNA"/>
</dbReference>
<dbReference type="EMBL" id="AK300036">
    <property type="protein sequence ID" value="BAG61847.1"/>
    <property type="molecule type" value="mRNA"/>
</dbReference>
<dbReference type="EMBL" id="AK315160">
    <property type="protein sequence ID" value="BAG37604.1"/>
    <property type="molecule type" value="mRNA"/>
</dbReference>
<dbReference type="EMBL" id="BX538002">
    <property type="protein sequence ID" value="CAD97957.1"/>
    <property type="molecule type" value="mRNA"/>
</dbReference>
<dbReference type="EMBL" id="AC110795">
    <property type="status" value="NOT_ANNOTATED_CDS"/>
    <property type="molecule type" value="Genomic_DNA"/>
</dbReference>
<dbReference type="EMBL" id="AC112719">
    <property type="status" value="NOT_ANNOTATED_CDS"/>
    <property type="molecule type" value="Genomic_DNA"/>
</dbReference>
<dbReference type="EMBL" id="CH471057">
    <property type="protein sequence ID" value="EAX05777.1"/>
    <property type="molecule type" value="Genomic_DNA"/>
</dbReference>
<dbReference type="CCDS" id="CCDS3576.1">
    <molecule id="Q7Z3B4-1"/>
</dbReference>
<dbReference type="CCDS" id="CCDS63998.1">
    <molecule id="Q7Z3B4-3"/>
</dbReference>
<dbReference type="RefSeq" id="NP_001265532.1">
    <molecule id="Q7Z3B4-3"/>
    <property type="nucleotide sequence ID" value="NM_001278603.2"/>
</dbReference>
<dbReference type="RefSeq" id="NP_059122.2">
    <molecule id="Q7Z3B4-1"/>
    <property type="nucleotide sequence ID" value="NM_017426.3"/>
</dbReference>
<dbReference type="PDB" id="4JNU">
    <property type="method" value="X-ray"/>
    <property type="resolution" value="1.44 A"/>
    <property type="chains" value="A/B/C/D=453-491"/>
</dbReference>
<dbReference type="PDB" id="4JNV">
    <property type="method" value="X-ray"/>
    <property type="resolution" value="1.85 A"/>
    <property type="chains" value="A/B/C/D=453-491"/>
</dbReference>
<dbReference type="PDB" id="4JO7">
    <property type="method" value="X-ray"/>
    <property type="resolution" value="1.75 A"/>
    <property type="chains" value="B/D/F/H=453-491"/>
</dbReference>
<dbReference type="PDB" id="4JO9">
    <property type="method" value="X-ray"/>
    <property type="resolution" value="2.50 A"/>
    <property type="chains" value="A/C=453-491"/>
</dbReference>
<dbReference type="PDB" id="5IJN">
    <property type="method" value="EM"/>
    <property type="resolution" value="21.40 A"/>
    <property type="chains" value="F/L/R/X=1-507"/>
</dbReference>
<dbReference type="PDB" id="5IJO">
    <property type="method" value="EM"/>
    <property type="resolution" value="21.40 A"/>
    <property type="chains" value="F/L/R/X=1-507"/>
</dbReference>
<dbReference type="PDB" id="7N8R">
    <property type="method" value="X-ray"/>
    <property type="resolution" value="1.20 A"/>
    <property type="chains" value="A/B=63-68"/>
</dbReference>
<dbReference type="PDB" id="7PER">
    <property type="method" value="EM"/>
    <property type="resolution" value="35.00 A"/>
    <property type="chains" value="F/L/R/X=1-507"/>
</dbReference>
<dbReference type="PDB" id="7R5J">
    <property type="method" value="EM"/>
    <property type="resolution" value="50.00 A"/>
    <property type="chains" value="H0/H1/H2/H3=1-507"/>
</dbReference>
<dbReference type="PDB" id="7R5K">
    <property type="method" value="EM"/>
    <property type="resolution" value="12.00 A"/>
    <property type="chains" value="H0/H1/H2/H3=1-507"/>
</dbReference>
<dbReference type="PDBsum" id="4JNU"/>
<dbReference type="PDBsum" id="4JNV"/>
<dbReference type="PDBsum" id="4JO7"/>
<dbReference type="PDBsum" id="4JO9"/>
<dbReference type="PDBsum" id="5IJN"/>
<dbReference type="PDBsum" id="5IJO"/>
<dbReference type="PDBsum" id="7N8R"/>
<dbReference type="PDBsum" id="7PER"/>
<dbReference type="PDBsum" id="7R5J"/>
<dbReference type="PDBsum" id="7R5K"/>
<dbReference type="EMDB" id="EMD-14321"/>
<dbReference type="EMDB" id="EMD-14322"/>
<dbReference type="SMR" id="Q7Z3B4"/>
<dbReference type="BioGRID" id="119759">
    <property type="interactions" value="149"/>
</dbReference>
<dbReference type="ComplexPortal" id="CPX-873">
    <property type="entry name" value="Nuclear pore complex"/>
</dbReference>
<dbReference type="CORUM" id="Q7Z3B4"/>
<dbReference type="FunCoup" id="Q7Z3B4">
    <property type="interactions" value="3521"/>
</dbReference>
<dbReference type="IntAct" id="Q7Z3B4">
    <property type="interactions" value="96"/>
</dbReference>
<dbReference type="MINT" id="Q7Z3B4"/>
<dbReference type="STRING" id="9606.ENSP00000264883"/>
<dbReference type="TCDB" id="1.I.1.1.3">
    <property type="family name" value="the nuclear pore complex (npc) family"/>
</dbReference>
<dbReference type="GlyCosmos" id="Q7Z3B4">
    <property type="glycosylation" value="8 sites, 1 glycan"/>
</dbReference>
<dbReference type="GlyGen" id="Q7Z3B4">
    <property type="glycosylation" value="11 sites, 1 O-linked glycan (11 sites)"/>
</dbReference>
<dbReference type="iPTMnet" id="Q7Z3B4"/>
<dbReference type="PhosphoSitePlus" id="Q7Z3B4"/>
<dbReference type="SwissPalm" id="Q7Z3B4"/>
<dbReference type="BioMuta" id="NUP54"/>
<dbReference type="jPOST" id="Q7Z3B4"/>
<dbReference type="MassIVE" id="Q7Z3B4"/>
<dbReference type="PaxDb" id="9606-ENSP00000264883"/>
<dbReference type="PeptideAtlas" id="Q7Z3B4"/>
<dbReference type="ProteomicsDB" id="5071"/>
<dbReference type="ProteomicsDB" id="69024">
    <molecule id="Q7Z3B4-1"/>
</dbReference>
<dbReference type="ProteomicsDB" id="69025">
    <molecule id="Q7Z3B4-2"/>
</dbReference>
<dbReference type="Pumba" id="Q7Z3B4"/>
<dbReference type="Antibodypedia" id="24771">
    <property type="antibodies" value="106 antibodies from 25 providers"/>
</dbReference>
<dbReference type="DNASU" id="53371"/>
<dbReference type="Ensembl" id="ENST00000264883.8">
    <molecule id="Q7Z3B4-1"/>
    <property type="protein sequence ID" value="ENSP00000264883.3"/>
    <property type="gene ID" value="ENSG00000138750.16"/>
</dbReference>
<dbReference type="Ensembl" id="ENST00000514987.6">
    <molecule id="Q7Z3B4-3"/>
    <property type="protein sequence ID" value="ENSP00000421304.1"/>
    <property type="gene ID" value="ENSG00000138750.16"/>
</dbReference>
<dbReference type="GeneID" id="53371"/>
<dbReference type="KEGG" id="hsa:53371"/>
<dbReference type="MANE-Select" id="ENST00000264883.8">
    <property type="protein sequence ID" value="ENSP00000264883.3"/>
    <property type="RefSeq nucleotide sequence ID" value="NM_017426.4"/>
    <property type="RefSeq protein sequence ID" value="NP_059122.2"/>
</dbReference>
<dbReference type="UCSC" id="uc003hjs.5">
    <molecule id="Q7Z3B4-1"/>
    <property type="organism name" value="human"/>
</dbReference>
<dbReference type="AGR" id="HGNC:17359"/>
<dbReference type="CTD" id="53371"/>
<dbReference type="DisGeNET" id="53371"/>
<dbReference type="GeneCards" id="NUP54"/>
<dbReference type="HGNC" id="HGNC:17359">
    <property type="gene designation" value="NUP54"/>
</dbReference>
<dbReference type="HPA" id="ENSG00000138750">
    <property type="expression patterns" value="Low tissue specificity"/>
</dbReference>
<dbReference type="MalaCards" id="NUP54"/>
<dbReference type="MIM" id="607607">
    <property type="type" value="gene"/>
</dbReference>
<dbReference type="MIM" id="620427">
    <property type="type" value="phenotype"/>
</dbReference>
<dbReference type="neXtProt" id="NX_Q7Z3B4"/>
<dbReference type="OpenTargets" id="ENSG00000138750"/>
<dbReference type="Orphanet" id="225154">
    <property type="disease" value="Familial infantile bilateral striatal necrosis"/>
</dbReference>
<dbReference type="PharmGKB" id="PA31853"/>
<dbReference type="VEuPathDB" id="HostDB:ENSG00000138750"/>
<dbReference type="eggNOG" id="KOG3091">
    <property type="taxonomic scope" value="Eukaryota"/>
</dbReference>
<dbReference type="GeneTree" id="ENSGT00390000013620"/>
<dbReference type="HOGENOM" id="CLU_033371_0_0_1"/>
<dbReference type="InParanoid" id="Q7Z3B4"/>
<dbReference type="OMA" id="MMQTRLH"/>
<dbReference type="OrthoDB" id="6162375at2759"/>
<dbReference type="PAN-GO" id="Q7Z3B4">
    <property type="GO annotations" value="5 GO annotations based on evolutionary models"/>
</dbReference>
<dbReference type="PhylomeDB" id="Q7Z3B4"/>
<dbReference type="TreeFam" id="TF320237"/>
<dbReference type="PathwayCommons" id="Q7Z3B4"/>
<dbReference type="Reactome" id="R-HSA-1169408">
    <property type="pathway name" value="ISG15 antiviral mechanism"/>
</dbReference>
<dbReference type="Reactome" id="R-HSA-159227">
    <property type="pathway name" value="Transport of the SLBP independent Mature mRNA"/>
</dbReference>
<dbReference type="Reactome" id="R-HSA-159230">
    <property type="pathway name" value="Transport of the SLBP Dependant Mature mRNA"/>
</dbReference>
<dbReference type="Reactome" id="R-HSA-159231">
    <property type="pathway name" value="Transport of Mature mRNA Derived from an Intronless Transcript"/>
</dbReference>
<dbReference type="Reactome" id="R-HSA-159236">
    <property type="pathway name" value="Transport of Mature mRNA derived from an Intron-Containing Transcript"/>
</dbReference>
<dbReference type="Reactome" id="R-HSA-165054">
    <property type="pathway name" value="Rev-mediated nuclear export of HIV RNA"/>
</dbReference>
<dbReference type="Reactome" id="R-HSA-168271">
    <property type="pathway name" value="Transport of Ribonucleoproteins into the Host Nucleus"/>
</dbReference>
<dbReference type="Reactome" id="R-HSA-168276">
    <property type="pathway name" value="NS1 Mediated Effects on Host Pathways"/>
</dbReference>
<dbReference type="Reactome" id="R-HSA-168325">
    <property type="pathway name" value="Viral Messenger RNA Synthesis"/>
</dbReference>
<dbReference type="Reactome" id="R-HSA-168333">
    <property type="pathway name" value="NEP/NS2 Interacts with the Cellular Export Machinery"/>
</dbReference>
<dbReference type="Reactome" id="R-HSA-170822">
    <property type="pathway name" value="Regulation of Glucokinase by Glucokinase Regulatory Protein"/>
</dbReference>
<dbReference type="Reactome" id="R-HSA-180746">
    <property type="pathway name" value="Nuclear import of Rev protein"/>
</dbReference>
<dbReference type="Reactome" id="R-HSA-180910">
    <property type="pathway name" value="Vpr-mediated nuclear import of PICs"/>
</dbReference>
<dbReference type="Reactome" id="R-HSA-191859">
    <property type="pathway name" value="snRNP Assembly"/>
</dbReference>
<dbReference type="Reactome" id="R-HSA-3108214">
    <property type="pathway name" value="SUMOylation of DNA damage response and repair proteins"/>
</dbReference>
<dbReference type="Reactome" id="R-HSA-3232142">
    <property type="pathway name" value="SUMOylation of ubiquitinylation proteins"/>
</dbReference>
<dbReference type="Reactome" id="R-HSA-3301854">
    <property type="pathway name" value="Nuclear Pore Complex (NPC) Disassembly"/>
</dbReference>
<dbReference type="Reactome" id="R-HSA-3371453">
    <property type="pathway name" value="Regulation of HSF1-mediated heat shock response"/>
</dbReference>
<dbReference type="Reactome" id="R-HSA-4085377">
    <property type="pathway name" value="SUMOylation of SUMOylation proteins"/>
</dbReference>
<dbReference type="Reactome" id="R-HSA-4551638">
    <property type="pathway name" value="SUMOylation of chromatin organization proteins"/>
</dbReference>
<dbReference type="Reactome" id="R-HSA-4570464">
    <property type="pathway name" value="SUMOylation of RNA binding proteins"/>
</dbReference>
<dbReference type="Reactome" id="R-HSA-4615885">
    <property type="pathway name" value="SUMOylation of DNA replication proteins"/>
</dbReference>
<dbReference type="Reactome" id="R-HSA-5578749">
    <property type="pathway name" value="Transcriptional regulation by small RNAs"/>
</dbReference>
<dbReference type="Reactome" id="R-HSA-5619107">
    <property type="pathway name" value="Defective TPR may confer susceptibility towards thyroid papillary carcinoma (TPC)"/>
</dbReference>
<dbReference type="Reactome" id="R-HSA-6784531">
    <property type="pathway name" value="tRNA processing in the nucleus"/>
</dbReference>
<dbReference type="Reactome" id="R-HSA-9609690">
    <property type="pathway name" value="HCMV Early Events"/>
</dbReference>
<dbReference type="Reactome" id="R-HSA-9610379">
    <property type="pathway name" value="HCMV Late Events"/>
</dbReference>
<dbReference type="Reactome" id="R-HSA-9615933">
    <property type="pathway name" value="Postmitotic nuclear pore complex (NPC) reformation"/>
</dbReference>
<dbReference type="Reactome" id="R-HSA-9705671">
    <property type="pathway name" value="SARS-CoV-2 activates/modulates innate and adaptive immune responses"/>
</dbReference>
<dbReference type="SignaLink" id="Q7Z3B4"/>
<dbReference type="SIGNOR" id="Q7Z3B4"/>
<dbReference type="BioGRID-ORCS" id="53371">
    <property type="hits" value="569 hits in 1177 CRISPR screens"/>
</dbReference>
<dbReference type="ChiTaRS" id="NUP54">
    <property type="organism name" value="human"/>
</dbReference>
<dbReference type="EvolutionaryTrace" id="Q7Z3B4"/>
<dbReference type="GeneWiki" id="NUP54"/>
<dbReference type="GenomeRNAi" id="53371"/>
<dbReference type="Pharos" id="Q7Z3B4">
    <property type="development level" value="Tbio"/>
</dbReference>
<dbReference type="PRO" id="PR:Q7Z3B4"/>
<dbReference type="Proteomes" id="UP000005640">
    <property type="component" value="Chromosome 4"/>
</dbReference>
<dbReference type="RNAct" id="Q7Z3B4">
    <property type="molecule type" value="protein"/>
</dbReference>
<dbReference type="Bgee" id="ENSG00000138750">
    <property type="expression patterns" value="Expressed in calcaneal tendon and 202 other cell types or tissues"/>
</dbReference>
<dbReference type="ExpressionAtlas" id="Q7Z3B4">
    <property type="expression patterns" value="baseline and differential"/>
</dbReference>
<dbReference type="GO" id="GO:0005635">
    <property type="term" value="C:nuclear envelope"/>
    <property type="evidence" value="ECO:0000314"/>
    <property type="project" value="ComplexPortal"/>
</dbReference>
<dbReference type="GO" id="GO:0031965">
    <property type="term" value="C:nuclear membrane"/>
    <property type="evidence" value="ECO:0007669"/>
    <property type="project" value="UniProtKB-SubCell"/>
</dbReference>
<dbReference type="GO" id="GO:0005643">
    <property type="term" value="C:nuclear pore"/>
    <property type="evidence" value="ECO:0000303"/>
    <property type="project" value="ComplexPortal"/>
</dbReference>
<dbReference type="GO" id="GO:0044613">
    <property type="term" value="C:nuclear pore central transport channel"/>
    <property type="evidence" value="ECO:0000318"/>
    <property type="project" value="GO_Central"/>
</dbReference>
<dbReference type="GO" id="GO:0017056">
    <property type="term" value="F:structural constituent of nuclear pore"/>
    <property type="evidence" value="ECO:0000318"/>
    <property type="project" value="GO_Central"/>
</dbReference>
<dbReference type="GO" id="GO:0051028">
    <property type="term" value="P:mRNA transport"/>
    <property type="evidence" value="ECO:0007669"/>
    <property type="project" value="UniProtKB-KW"/>
</dbReference>
<dbReference type="GO" id="GO:0006607">
    <property type="term" value="P:NLS-bearing protein import into nucleus"/>
    <property type="evidence" value="ECO:0000318"/>
    <property type="project" value="GO_Central"/>
</dbReference>
<dbReference type="GO" id="GO:0006999">
    <property type="term" value="P:nuclear pore organization"/>
    <property type="evidence" value="ECO:0000318"/>
    <property type="project" value="GO_Central"/>
</dbReference>
<dbReference type="GO" id="GO:0006913">
    <property type="term" value="P:nucleocytoplasmic transport"/>
    <property type="evidence" value="ECO:0000303"/>
    <property type="project" value="ComplexPortal"/>
</dbReference>
<dbReference type="GO" id="GO:0036228">
    <property type="term" value="P:protein localization to nuclear inner membrane"/>
    <property type="evidence" value="ECO:0000318"/>
    <property type="project" value="GO_Central"/>
</dbReference>
<dbReference type="FunFam" id="1.20.5.490:FF:000003">
    <property type="entry name" value="nucleoporin p54 isoform X1"/>
    <property type="match status" value="1"/>
</dbReference>
<dbReference type="FunFam" id="1.20.5.170:FF:000034">
    <property type="entry name" value="Nucleoporin P54, putative"/>
    <property type="match status" value="1"/>
</dbReference>
<dbReference type="Gene3D" id="1.20.5.170">
    <property type="match status" value="1"/>
</dbReference>
<dbReference type="Gene3D" id="1.20.5.490">
    <property type="entry name" value="Single helix bin"/>
    <property type="match status" value="1"/>
</dbReference>
<dbReference type="InterPro" id="IPR024864">
    <property type="entry name" value="Nup54/Nup57/Nup44"/>
</dbReference>
<dbReference type="InterPro" id="IPR025712">
    <property type="entry name" value="Nup54_alpha-helical_dom"/>
</dbReference>
<dbReference type="InterPro" id="IPR040985">
    <property type="entry name" value="Nup54_C"/>
</dbReference>
<dbReference type="PANTHER" id="PTHR13000">
    <property type="entry name" value="NUCLEOPORIN P54"/>
    <property type="match status" value="1"/>
</dbReference>
<dbReference type="PANTHER" id="PTHR13000:SF0">
    <property type="entry name" value="NUCLEOPORIN P54"/>
    <property type="match status" value="1"/>
</dbReference>
<dbReference type="Pfam" id="PF13874">
    <property type="entry name" value="Nup54"/>
    <property type="match status" value="1"/>
</dbReference>
<dbReference type="Pfam" id="PF18437">
    <property type="entry name" value="Nup54_C"/>
    <property type="match status" value="1"/>
</dbReference>